<reference key="1">
    <citation type="submission" date="2006-12" db="EMBL/GenBank/DDBJ databases">
        <title>Complete sequence of Shewanella amazonensis SB2B.</title>
        <authorList>
            <consortium name="US DOE Joint Genome Institute"/>
            <person name="Copeland A."/>
            <person name="Lucas S."/>
            <person name="Lapidus A."/>
            <person name="Barry K."/>
            <person name="Detter J.C."/>
            <person name="Glavina del Rio T."/>
            <person name="Hammon N."/>
            <person name="Israni S."/>
            <person name="Dalin E."/>
            <person name="Tice H."/>
            <person name="Pitluck S."/>
            <person name="Munk A.C."/>
            <person name="Brettin T."/>
            <person name="Bruce D."/>
            <person name="Han C."/>
            <person name="Tapia R."/>
            <person name="Gilna P."/>
            <person name="Schmutz J."/>
            <person name="Larimer F."/>
            <person name="Land M."/>
            <person name="Hauser L."/>
            <person name="Kyrpides N."/>
            <person name="Mikhailova N."/>
            <person name="Fredrickson J."/>
            <person name="Richardson P."/>
        </authorList>
    </citation>
    <scope>NUCLEOTIDE SEQUENCE [LARGE SCALE GENOMIC DNA]</scope>
    <source>
        <strain>ATCC BAA-1098 / SB2B</strain>
    </source>
</reference>
<accession>A1S4M2</accession>
<comment type="function">
    <text evidence="1">Interacts with the SecY protein in vivo. May bind preferentially to an uncomplexed state of SecY, thus functioning either as a chelating agent for excess SecY in the cell or as a regulatory factor that negatively controls the translocase function.</text>
</comment>
<comment type="subcellular location">
    <subcellularLocation>
        <location evidence="1">Cell inner membrane</location>
        <topology evidence="1">Peripheral membrane protein</topology>
        <orientation evidence="1">Cytoplasmic side</orientation>
    </subcellularLocation>
    <text evidence="1">Loosely associated with the cytoplasmic side of the inner membrane, probably via SecY.</text>
</comment>
<comment type="similarity">
    <text evidence="1">Belongs to the Syd family.</text>
</comment>
<organism>
    <name type="scientific">Shewanella amazonensis (strain ATCC BAA-1098 / SB2B)</name>
    <dbReference type="NCBI Taxonomy" id="326297"/>
    <lineage>
        <taxon>Bacteria</taxon>
        <taxon>Pseudomonadati</taxon>
        <taxon>Pseudomonadota</taxon>
        <taxon>Gammaproteobacteria</taxon>
        <taxon>Alteromonadales</taxon>
        <taxon>Shewanellaceae</taxon>
        <taxon>Shewanella</taxon>
    </lineage>
</organism>
<protein>
    <recommendedName>
        <fullName evidence="1">Protein Syd</fullName>
    </recommendedName>
</protein>
<gene>
    <name evidence="1" type="primary">syd</name>
    <name type="ordered locus">Sama_1121</name>
</gene>
<feature type="chain" id="PRO_0000298257" description="Protein Syd">
    <location>
        <begin position="1"/>
        <end position="215"/>
    </location>
</feature>
<dbReference type="EMBL" id="CP000507">
    <property type="protein sequence ID" value="ABL99328.1"/>
    <property type="molecule type" value="Genomic_DNA"/>
</dbReference>
<dbReference type="RefSeq" id="WP_011759237.1">
    <property type="nucleotide sequence ID" value="NC_008700.1"/>
</dbReference>
<dbReference type="SMR" id="A1S4M2"/>
<dbReference type="STRING" id="326297.Sama_1121"/>
<dbReference type="KEGG" id="saz:Sama_1121"/>
<dbReference type="eggNOG" id="ENOG502ZCMR">
    <property type="taxonomic scope" value="Bacteria"/>
</dbReference>
<dbReference type="HOGENOM" id="CLU_121866_0_0_6"/>
<dbReference type="OrthoDB" id="5599437at2"/>
<dbReference type="Proteomes" id="UP000009175">
    <property type="component" value="Chromosome"/>
</dbReference>
<dbReference type="GO" id="GO:0009898">
    <property type="term" value="C:cytoplasmic side of plasma membrane"/>
    <property type="evidence" value="ECO:0007669"/>
    <property type="project" value="InterPro"/>
</dbReference>
<dbReference type="CDD" id="cd16323">
    <property type="entry name" value="Syd"/>
    <property type="match status" value="1"/>
</dbReference>
<dbReference type="Gene3D" id="3.40.1580.20">
    <property type="entry name" value="Syd protein"/>
    <property type="match status" value="1"/>
</dbReference>
<dbReference type="HAMAP" id="MF_01104">
    <property type="entry name" value="Syd"/>
    <property type="match status" value="1"/>
</dbReference>
<dbReference type="InterPro" id="IPR009948">
    <property type="entry name" value="Syd"/>
</dbReference>
<dbReference type="InterPro" id="IPR038228">
    <property type="entry name" value="Syd_sf"/>
</dbReference>
<dbReference type="NCBIfam" id="NF003439">
    <property type="entry name" value="PRK04968.1"/>
    <property type="match status" value="1"/>
</dbReference>
<dbReference type="Pfam" id="PF07348">
    <property type="entry name" value="Syd"/>
    <property type="match status" value="1"/>
</dbReference>
<keyword id="KW-0997">Cell inner membrane</keyword>
<keyword id="KW-1003">Cell membrane</keyword>
<keyword id="KW-0472">Membrane</keyword>
<keyword id="KW-1185">Reference proteome</keyword>
<name>SYDP_SHEAM</name>
<evidence type="ECO:0000255" key="1">
    <source>
        <dbReference type="HAMAP-Rule" id="MF_01104"/>
    </source>
</evidence>
<proteinExistence type="inferred from homology"/>
<sequence length="215" mass="24389">MSCLAALTKFHEIYKAAFVERLGELPRCFTHGRPSPCLADDALAGSEEPQPWQMVPRREVAVFNNVSHAMDIELHHDIDDFYGHLFGGPLQFDSPWGEGELIQIWNEDDFVLLQQNILGHLMMKKQLKQPQTWFVGLIGDVDEMVSVNNADGTVWREVAGQEPHEQLAESLEAFLQQLKPRVAPPQYHQEPAATVNPHPGIFASLKRMWQNLTGR</sequence>